<feature type="chain" id="PRO_0000069733" description="Melanocortin receptor 5">
    <location>
        <begin position="1"/>
        <end position="325"/>
    </location>
</feature>
<feature type="topological domain" description="Extracellular" evidence="1">
    <location>
        <begin position="1"/>
        <end position="37"/>
    </location>
</feature>
<feature type="transmembrane region" description="Helical; Name=1" evidence="1">
    <location>
        <begin position="38"/>
        <end position="61"/>
    </location>
</feature>
<feature type="topological domain" description="Cytoplasmic" evidence="1">
    <location>
        <begin position="62"/>
        <end position="73"/>
    </location>
</feature>
<feature type="transmembrane region" description="Helical; Name=2" evidence="1">
    <location>
        <begin position="74"/>
        <end position="97"/>
    </location>
</feature>
<feature type="topological domain" description="Extracellular" evidence="1">
    <location>
        <begin position="98"/>
        <end position="114"/>
    </location>
</feature>
<feature type="transmembrane region" description="Helical; Name=3" evidence="1">
    <location>
        <begin position="115"/>
        <end position="138"/>
    </location>
</feature>
<feature type="topological domain" description="Cytoplasmic" evidence="1">
    <location>
        <begin position="139"/>
        <end position="155"/>
    </location>
</feature>
<feature type="transmembrane region" description="Helical; Name=4" evidence="1">
    <location>
        <begin position="156"/>
        <end position="179"/>
    </location>
</feature>
<feature type="topological domain" description="Extracellular" evidence="1">
    <location>
        <begin position="180"/>
        <end position="186"/>
    </location>
</feature>
<feature type="transmembrane region" description="Helical; Name=5" evidence="1">
    <location>
        <begin position="187"/>
        <end position="211"/>
    </location>
</feature>
<feature type="topological domain" description="Cytoplasmic" evidence="1">
    <location>
        <begin position="212"/>
        <end position="239"/>
    </location>
</feature>
<feature type="transmembrane region" description="Helical; Name=6" evidence="1">
    <location>
        <begin position="240"/>
        <end position="265"/>
    </location>
</feature>
<feature type="topological domain" description="Extracellular" evidence="1">
    <location>
        <begin position="266"/>
        <end position="273"/>
    </location>
</feature>
<feature type="transmembrane region" description="Helical; Name=7" evidence="1">
    <location>
        <begin position="274"/>
        <end position="297"/>
    </location>
</feature>
<feature type="topological domain" description="Cytoplasmic" evidence="1">
    <location>
        <begin position="298"/>
        <end position="325"/>
    </location>
</feature>
<feature type="lipid moiety-binding region" description="S-palmitoyl cysteine" evidence="1">
    <location>
        <position position="311"/>
    </location>
</feature>
<feature type="glycosylation site" description="N-linked (GlcNAc...) asparagine" evidence="1">
    <location>
        <position position="2"/>
    </location>
</feature>
<feature type="glycosylation site" description="N-linked (GlcNAc...) asparagine" evidence="1">
    <location>
        <position position="15"/>
    </location>
</feature>
<feature type="glycosylation site" description="N-linked (GlcNAc...) asparagine" evidence="1">
    <location>
        <position position="20"/>
    </location>
</feature>
<feature type="glycosylation site" description="N-linked (GlcNAc...) asparagine" evidence="1">
    <location>
        <position position="28"/>
    </location>
</feature>
<protein>
    <recommendedName>
        <fullName>Melanocortin receptor 5</fullName>
        <shortName>MC5-R</shortName>
    </recommendedName>
</protein>
<comment type="function">
    <text>Receptor for MSH (alpha, beta and gamma) and ACTH. The activity of this receptor is mediated by G proteins which activate adenylate cyclase. This receptor is a possible mediator of the immunomodulation properties of melanocortins.</text>
</comment>
<comment type="subcellular location">
    <subcellularLocation>
        <location>Cell membrane</location>
        <topology>Multi-pass membrane protein</topology>
    </subcellularLocation>
</comment>
<comment type="similarity">
    <text evidence="2">Belongs to the G-protein coupled receptor 1 family.</text>
</comment>
<name>MC5R_SHEEP</name>
<sequence length="325" mass="36585">MNSSFHLHFLDLGLNATEGNLSGLSVRNASSPCEDMGIAVEVFLALGLISLLENILVIGAIVRNRNLHIPMYFFVGSLAVADMLVSLSNFWETITIYLLTNKHLVMADASVRHLDNVFDSMICISVVASMCSLLAIAVDRYVTIFCRLRYQRIMTGRRSGAIIAGIWAFCTSCGTVFIVYYESTYVVVCLIAMFLTMLLLMASLYTHMFLLARTHVRRIAALPGHSSVRQRTGVKGAITLAMLLGVFIICWAPFFLHLILMISCPQNLYCSCFMSHFNMYLILIMCNSVIDPLIYAFRSQEMRKTFKEIVCFQGFRTPCRFPSTY</sequence>
<gene>
    <name type="primary">MC5R</name>
</gene>
<keyword id="KW-1003">Cell membrane</keyword>
<keyword id="KW-0297">G-protein coupled receptor</keyword>
<keyword id="KW-0325">Glycoprotein</keyword>
<keyword id="KW-0449">Lipoprotein</keyword>
<keyword id="KW-0472">Membrane</keyword>
<keyword id="KW-0564">Palmitate</keyword>
<keyword id="KW-0675">Receptor</keyword>
<keyword id="KW-1185">Reference proteome</keyword>
<keyword id="KW-0807">Transducer</keyword>
<keyword id="KW-0812">Transmembrane</keyword>
<keyword id="KW-1133">Transmembrane helix</keyword>
<evidence type="ECO:0000255" key="1"/>
<evidence type="ECO:0000255" key="2">
    <source>
        <dbReference type="PROSITE-ProRule" id="PRU00521"/>
    </source>
</evidence>
<accession>P41983</accession>
<reference key="1">
    <citation type="journal article" date="1994" name="J. Mol. Endocrinol.">
        <title>Cloning and expression of a new member of the melanocyte-stimulating hormone receptor family.</title>
        <authorList>
            <person name="Barrett P."/>
            <person name="Macdonald A."/>
            <person name="Helliwell R."/>
            <person name="Davidson G."/>
            <person name="Morgan P.J."/>
        </authorList>
    </citation>
    <scope>NUCLEOTIDE SEQUENCE [GENOMIC DNA]</scope>
    <source>
        <tissue>Pituitary anterior lobe</tissue>
    </source>
</reference>
<organism>
    <name type="scientific">Ovis aries</name>
    <name type="common">Sheep</name>
    <dbReference type="NCBI Taxonomy" id="9940"/>
    <lineage>
        <taxon>Eukaryota</taxon>
        <taxon>Metazoa</taxon>
        <taxon>Chordata</taxon>
        <taxon>Craniata</taxon>
        <taxon>Vertebrata</taxon>
        <taxon>Euteleostomi</taxon>
        <taxon>Mammalia</taxon>
        <taxon>Eutheria</taxon>
        <taxon>Laurasiatheria</taxon>
        <taxon>Artiodactyla</taxon>
        <taxon>Ruminantia</taxon>
        <taxon>Pecora</taxon>
        <taxon>Bovidae</taxon>
        <taxon>Caprinae</taxon>
        <taxon>Ovis</taxon>
    </lineage>
</organism>
<proteinExistence type="inferred from homology"/>
<dbReference type="EMBL" id="Z31369">
    <property type="protein sequence ID" value="CAA83239.1"/>
    <property type="molecule type" value="Genomic_DNA"/>
</dbReference>
<dbReference type="PIR" id="I46416">
    <property type="entry name" value="I46416"/>
</dbReference>
<dbReference type="SMR" id="P41983"/>
<dbReference type="STRING" id="9940.ENSOARP00000002365"/>
<dbReference type="GlyCosmos" id="P41983">
    <property type="glycosylation" value="4 sites, No reported glycans"/>
</dbReference>
<dbReference type="PaxDb" id="9940-ENSOARP00000002365"/>
<dbReference type="eggNOG" id="KOG3656">
    <property type="taxonomic scope" value="Eukaryota"/>
</dbReference>
<dbReference type="Proteomes" id="UP000002356">
    <property type="component" value="Unplaced"/>
</dbReference>
<dbReference type="GO" id="GO:0005886">
    <property type="term" value="C:plasma membrane"/>
    <property type="evidence" value="ECO:0007669"/>
    <property type="project" value="UniProtKB-SubCell"/>
</dbReference>
<dbReference type="GO" id="GO:0004977">
    <property type="term" value="F:melanocortin receptor activity"/>
    <property type="evidence" value="ECO:0007669"/>
    <property type="project" value="InterPro"/>
</dbReference>
<dbReference type="FunFam" id="1.20.1070.10:FF:000077">
    <property type="entry name" value="Melanocortin receptor 4"/>
    <property type="match status" value="1"/>
</dbReference>
<dbReference type="Gene3D" id="1.20.1070.10">
    <property type="entry name" value="Rhodopsin 7-helix transmembrane proteins"/>
    <property type="match status" value="1"/>
</dbReference>
<dbReference type="InterPro" id="IPR000276">
    <property type="entry name" value="GPCR_Rhodpsn"/>
</dbReference>
<dbReference type="InterPro" id="IPR017452">
    <property type="entry name" value="GPCR_Rhodpsn_7TM"/>
</dbReference>
<dbReference type="InterPro" id="IPR001908">
    <property type="entry name" value="MC3-5R"/>
</dbReference>
<dbReference type="InterPro" id="IPR000621">
    <property type="entry name" value="Melancort_rcpt_5"/>
</dbReference>
<dbReference type="InterPro" id="IPR001671">
    <property type="entry name" value="Melcrt_ACTH_rcpt"/>
</dbReference>
<dbReference type="PANTHER" id="PTHR22750">
    <property type="entry name" value="G-PROTEIN COUPLED RECEPTOR"/>
    <property type="match status" value="1"/>
</dbReference>
<dbReference type="Pfam" id="PF00001">
    <property type="entry name" value="7tm_1"/>
    <property type="match status" value="1"/>
</dbReference>
<dbReference type="PRINTS" id="PR00237">
    <property type="entry name" value="GPCRRHODOPSN"/>
</dbReference>
<dbReference type="PRINTS" id="PR00534">
    <property type="entry name" value="MCRFAMILY"/>
</dbReference>
<dbReference type="PRINTS" id="PR00535">
    <property type="entry name" value="MELNOCORTINR"/>
</dbReference>
<dbReference type="PRINTS" id="PR01063">
    <property type="entry name" value="MELNOCORTN5R"/>
</dbReference>
<dbReference type="SMART" id="SM01381">
    <property type="entry name" value="7TM_GPCR_Srsx"/>
    <property type="match status" value="1"/>
</dbReference>
<dbReference type="SUPFAM" id="SSF81321">
    <property type="entry name" value="Family A G protein-coupled receptor-like"/>
    <property type="match status" value="1"/>
</dbReference>
<dbReference type="PROSITE" id="PS00237">
    <property type="entry name" value="G_PROTEIN_RECEP_F1_1"/>
    <property type="match status" value="1"/>
</dbReference>
<dbReference type="PROSITE" id="PS50262">
    <property type="entry name" value="G_PROTEIN_RECEP_F1_2"/>
    <property type="match status" value="1"/>
</dbReference>